<keyword id="KW-0030">Aminoacyl-tRNA synthetase</keyword>
<keyword id="KW-0067">ATP-binding</keyword>
<keyword id="KW-0150">Chloroplast</keyword>
<keyword id="KW-0436">Ligase</keyword>
<keyword id="KW-0496">Mitochondrion</keyword>
<keyword id="KW-0547">Nucleotide-binding</keyword>
<keyword id="KW-0934">Plastid</keyword>
<keyword id="KW-1185">Reference proteome</keyword>
<keyword id="KW-0809">Transit peptide</keyword>
<dbReference type="EC" id="6.1.1.15" evidence="6"/>
<dbReference type="EMBL" id="AP000378">
    <property type="protein sequence ID" value="BAB10183.1"/>
    <property type="molecule type" value="Genomic_DNA"/>
</dbReference>
<dbReference type="EMBL" id="CP002688">
    <property type="protein sequence ID" value="AED96224.1"/>
    <property type="molecule type" value="Genomic_DNA"/>
</dbReference>
<dbReference type="EMBL" id="BT010566">
    <property type="protein sequence ID" value="AAQ65189.1"/>
    <property type="molecule type" value="mRNA"/>
</dbReference>
<dbReference type="EMBL" id="AK176421">
    <property type="protein sequence ID" value="BAD44184.1"/>
    <property type="molecule type" value="mRNA"/>
</dbReference>
<dbReference type="RefSeq" id="NP_200065.1">
    <property type="nucleotide sequence ID" value="NM_124631.4"/>
</dbReference>
<dbReference type="SMR" id="Q9FYR6"/>
<dbReference type="FunCoup" id="Q9FYR6">
    <property type="interactions" value="861"/>
</dbReference>
<dbReference type="STRING" id="3702.Q9FYR6"/>
<dbReference type="GlyGen" id="Q9FYR6">
    <property type="glycosylation" value="1 site"/>
</dbReference>
<dbReference type="iPTMnet" id="Q9FYR6"/>
<dbReference type="PaxDb" id="3702-AT5G52520.1"/>
<dbReference type="ProteomicsDB" id="228472"/>
<dbReference type="EnsemblPlants" id="AT5G52520.1">
    <property type="protein sequence ID" value="AT5G52520.1"/>
    <property type="gene ID" value="AT5G52520"/>
</dbReference>
<dbReference type="GeneID" id="835328"/>
<dbReference type="Gramene" id="AT5G52520.1">
    <property type="protein sequence ID" value="AT5G52520.1"/>
    <property type="gene ID" value="AT5G52520"/>
</dbReference>
<dbReference type="KEGG" id="ath:AT5G52520"/>
<dbReference type="Araport" id="AT5G52520"/>
<dbReference type="TAIR" id="AT5G52520">
    <property type="gene designation" value="OVA6"/>
</dbReference>
<dbReference type="eggNOG" id="KOG4163">
    <property type="taxonomic scope" value="Eukaryota"/>
</dbReference>
<dbReference type="HOGENOM" id="CLU_001882_4_2_1"/>
<dbReference type="InParanoid" id="Q9FYR6"/>
<dbReference type="OMA" id="HRWEMRT"/>
<dbReference type="OrthoDB" id="1350766at2759"/>
<dbReference type="PhylomeDB" id="Q9FYR6"/>
<dbReference type="PRO" id="PR:Q9FYR6"/>
<dbReference type="Proteomes" id="UP000006548">
    <property type="component" value="Chromosome 5"/>
</dbReference>
<dbReference type="ExpressionAtlas" id="Q9FYR6">
    <property type="expression patterns" value="baseline and differential"/>
</dbReference>
<dbReference type="GO" id="GO:0009507">
    <property type="term" value="C:chloroplast"/>
    <property type="evidence" value="ECO:0000314"/>
    <property type="project" value="TAIR"/>
</dbReference>
<dbReference type="GO" id="GO:0009570">
    <property type="term" value="C:chloroplast stroma"/>
    <property type="evidence" value="ECO:0007005"/>
    <property type="project" value="TAIR"/>
</dbReference>
<dbReference type="GO" id="GO:0005739">
    <property type="term" value="C:mitochondrion"/>
    <property type="evidence" value="ECO:0000314"/>
    <property type="project" value="TAIR"/>
</dbReference>
<dbReference type="GO" id="GO:0005524">
    <property type="term" value="F:ATP binding"/>
    <property type="evidence" value="ECO:0007669"/>
    <property type="project" value="UniProtKB-KW"/>
</dbReference>
<dbReference type="GO" id="GO:0004827">
    <property type="term" value="F:proline-tRNA ligase activity"/>
    <property type="evidence" value="ECO:0000314"/>
    <property type="project" value="TAIR"/>
</dbReference>
<dbReference type="GO" id="GO:0009553">
    <property type="term" value="P:embryo sac development"/>
    <property type="evidence" value="ECO:0000315"/>
    <property type="project" value="TAIR"/>
</dbReference>
<dbReference type="GO" id="GO:0048481">
    <property type="term" value="P:plant ovule development"/>
    <property type="evidence" value="ECO:0000315"/>
    <property type="project" value="TAIR"/>
</dbReference>
<dbReference type="GO" id="GO:0006433">
    <property type="term" value="P:prolyl-tRNA aminoacylation"/>
    <property type="evidence" value="ECO:0007669"/>
    <property type="project" value="InterPro"/>
</dbReference>
<dbReference type="GO" id="GO:0010109">
    <property type="term" value="P:regulation of photosynthesis"/>
    <property type="evidence" value="ECO:0000315"/>
    <property type="project" value="TAIR"/>
</dbReference>
<dbReference type="GO" id="GO:0048316">
    <property type="term" value="P:seed development"/>
    <property type="evidence" value="ECO:0000315"/>
    <property type="project" value="TAIR"/>
</dbReference>
<dbReference type="CDD" id="cd00862">
    <property type="entry name" value="ProRS_anticodon_zinc"/>
    <property type="match status" value="1"/>
</dbReference>
<dbReference type="CDD" id="cd00778">
    <property type="entry name" value="ProRS_core_arch_euk"/>
    <property type="match status" value="1"/>
</dbReference>
<dbReference type="FunFam" id="3.30.930.10:FF:000023">
    <property type="entry name" value="Proline--tRNA ligase"/>
    <property type="match status" value="1"/>
</dbReference>
<dbReference type="FunFam" id="3.30.110.30:FF:000004">
    <property type="entry name" value="Proline--tRNA ligase, chloroplastic/mitochondrial"/>
    <property type="match status" value="1"/>
</dbReference>
<dbReference type="FunFam" id="3.40.50.800:FF:000016">
    <property type="entry name" value="Proline--tRNA ligase, chloroplastic/mitochondrial"/>
    <property type="match status" value="1"/>
</dbReference>
<dbReference type="Gene3D" id="3.40.50.800">
    <property type="entry name" value="Anticodon-binding domain"/>
    <property type="match status" value="1"/>
</dbReference>
<dbReference type="Gene3D" id="3.30.930.10">
    <property type="entry name" value="Bira Bifunctional Protein, Domain 2"/>
    <property type="match status" value="1"/>
</dbReference>
<dbReference type="Gene3D" id="3.30.110.30">
    <property type="entry name" value="C-terminal domain of ProRS"/>
    <property type="match status" value="1"/>
</dbReference>
<dbReference type="HAMAP" id="MF_01571">
    <property type="entry name" value="Pro_tRNA_synth_type3"/>
    <property type="match status" value="1"/>
</dbReference>
<dbReference type="InterPro" id="IPR002314">
    <property type="entry name" value="aa-tRNA-synt_IIb"/>
</dbReference>
<dbReference type="InterPro" id="IPR006195">
    <property type="entry name" value="aa-tRNA-synth_II"/>
</dbReference>
<dbReference type="InterPro" id="IPR045864">
    <property type="entry name" value="aa-tRNA-synth_II/BPL/LPL"/>
</dbReference>
<dbReference type="InterPro" id="IPR004154">
    <property type="entry name" value="Anticodon-bd"/>
</dbReference>
<dbReference type="InterPro" id="IPR036621">
    <property type="entry name" value="Anticodon-bd_dom_sf"/>
</dbReference>
<dbReference type="InterPro" id="IPR002316">
    <property type="entry name" value="Pro-tRNA-ligase_IIa"/>
</dbReference>
<dbReference type="InterPro" id="IPR004499">
    <property type="entry name" value="Pro-tRNA-ligase_IIa_arc-type"/>
</dbReference>
<dbReference type="InterPro" id="IPR016061">
    <property type="entry name" value="Pro-tRNA_ligase_II_C"/>
</dbReference>
<dbReference type="InterPro" id="IPR017449">
    <property type="entry name" value="Pro-tRNA_synth_II"/>
</dbReference>
<dbReference type="InterPro" id="IPR033721">
    <property type="entry name" value="ProRS_core_arch_euk"/>
</dbReference>
<dbReference type="NCBIfam" id="TIGR00408">
    <property type="entry name" value="proS_fam_I"/>
    <property type="match status" value="1"/>
</dbReference>
<dbReference type="PANTHER" id="PTHR43382:SF3">
    <property type="entry name" value="PROLINE--TRNA LIGASE, CHLOROPLASTIC_MITOCHONDRIAL"/>
    <property type="match status" value="1"/>
</dbReference>
<dbReference type="PANTHER" id="PTHR43382">
    <property type="entry name" value="PROLYL-TRNA SYNTHETASE"/>
    <property type="match status" value="1"/>
</dbReference>
<dbReference type="Pfam" id="PF03129">
    <property type="entry name" value="HGTP_anticodon"/>
    <property type="match status" value="1"/>
</dbReference>
<dbReference type="Pfam" id="PF09180">
    <property type="entry name" value="ProRS-C_1"/>
    <property type="match status" value="1"/>
</dbReference>
<dbReference type="Pfam" id="PF00587">
    <property type="entry name" value="tRNA-synt_2b"/>
    <property type="match status" value="1"/>
</dbReference>
<dbReference type="PRINTS" id="PR01046">
    <property type="entry name" value="TRNASYNTHPRO"/>
</dbReference>
<dbReference type="SMART" id="SM00946">
    <property type="entry name" value="ProRS-C_1"/>
    <property type="match status" value="1"/>
</dbReference>
<dbReference type="SUPFAM" id="SSF64586">
    <property type="entry name" value="C-terminal domain of ProRS"/>
    <property type="match status" value="1"/>
</dbReference>
<dbReference type="SUPFAM" id="SSF52954">
    <property type="entry name" value="Class II aaRS ABD-related"/>
    <property type="match status" value="1"/>
</dbReference>
<dbReference type="SUPFAM" id="SSF55681">
    <property type="entry name" value="Class II aaRS and biotin synthetases"/>
    <property type="match status" value="1"/>
</dbReference>
<dbReference type="PROSITE" id="PS50862">
    <property type="entry name" value="AA_TRNA_LIGASE_II"/>
    <property type="match status" value="1"/>
</dbReference>
<sequence length="543" mass="60747">MVSSSLRLPSLTSLLFPATTRYPATLRRTVCLRNRPLSGFATAPSGTASPETKSSEVDRLRSDRAVTPRSQDFNAWYLDVIASAELADYGPVRGTMVIRPYGYAIWEAIQDYLNVKFKETGHSNMYFPQFIPYSFIEKEASHVEGFSPELALVTVGGGKELEEKLVVRPTSETIVNHMFTQWIHSYRDLPLMINQWANVTRWEMRTKPFIRTLEFLWQEGHTAHATPEEAEKEAKQMIEIYTRFAFEQTAIPVIPGRKSKLETFAGADITYTIEAMMGDRKALQAGTSHNLGQNFSRAFGTQFADENGERQHVWQTSWAVSTRFVGGIIMTHGDDTGLMLPPKIAPIQVVIVPIWKKDTEKTGVLSAASSVKEALQTAGVRVKLDDTDQRTPGWKFNFWEMKGIPLRIEIGPRDVSSNSVVVSRRDVPGKAGKVFGISMEPSTLVAYVKEKLDEIQTSLLEKALSFRDSNIVDVNSYAELKDAISSGKWARGPWSASDADEQRVKEETGATIRCFPFEQTQGTKTCLMTGNPAEEVAIFAKSY</sequence>
<reference key="1">
    <citation type="submission" date="1999-07" db="EMBL/GenBank/DDBJ databases">
        <title>Structural analysis of Arabidopsis thaliana chromosome 5. XI.</title>
        <authorList>
            <person name="Kaneko T."/>
            <person name="Katoh T."/>
            <person name="Asamizu E."/>
            <person name="Sato S."/>
            <person name="Nakamura Y."/>
            <person name="Kotani H."/>
            <person name="Tabata S."/>
        </authorList>
    </citation>
    <scope>NUCLEOTIDE SEQUENCE [LARGE SCALE GENOMIC DNA]</scope>
    <source>
        <strain>cv. Columbia</strain>
    </source>
</reference>
<reference key="2">
    <citation type="journal article" date="2017" name="Plant J.">
        <title>Araport11: a complete reannotation of the Arabidopsis thaliana reference genome.</title>
        <authorList>
            <person name="Cheng C.Y."/>
            <person name="Krishnakumar V."/>
            <person name="Chan A.P."/>
            <person name="Thibaud-Nissen F."/>
            <person name="Schobel S."/>
            <person name="Town C.D."/>
        </authorList>
    </citation>
    <scope>GENOME REANNOTATION</scope>
    <source>
        <strain>cv. Columbia</strain>
    </source>
</reference>
<reference key="3">
    <citation type="journal article" date="2003" name="Science">
        <title>Empirical analysis of transcriptional activity in the Arabidopsis genome.</title>
        <authorList>
            <person name="Yamada K."/>
            <person name="Lim J."/>
            <person name="Dale J.M."/>
            <person name="Chen H."/>
            <person name="Shinn P."/>
            <person name="Palm C.J."/>
            <person name="Southwick A.M."/>
            <person name="Wu H.C."/>
            <person name="Kim C.J."/>
            <person name="Nguyen M."/>
            <person name="Pham P.K."/>
            <person name="Cheuk R.F."/>
            <person name="Karlin-Newmann G."/>
            <person name="Liu S.X."/>
            <person name="Lam B."/>
            <person name="Sakano H."/>
            <person name="Wu T."/>
            <person name="Yu G."/>
            <person name="Miranda M."/>
            <person name="Quach H.L."/>
            <person name="Tripp M."/>
            <person name="Chang C.H."/>
            <person name="Lee J.M."/>
            <person name="Toriumi M.J."/>
            <person name="Chan M.M."/>
            <person name="Tang C.C."/>
            <person name="Onodera C.S."/>
            <person name="Deng J.M."/>
            <person name="Akiyama K."/>
            <person name="Ansari Y."/>
            <person name="Arakawa T."/>
            <person name="Banh J."/>
            <person name="Banno F."/>
            <person name="Bowser L."/>
            <person name="Brooks S.Y."/>
            <person name="Carninci P."/>
            <person name="Chao Q."/>
            <person name="Choy N."/>
            <person name="Enju A."/>
            <person name="Goldsmith A.D."/>
            <person name="Gurjal M."/>
            <person name="Hansen N.F."/>
            <person name="Hayashizaki Y."/>
            <person name="Johnson-Hopson C."/>
            <person name="Hsuan V.W."/>
            <person name="Iida K."/>
            <person name="Karnes M."/>
            <person name="Khan S."/>
            <person name="Koesema E."/>
            <person name="Ishida J."/>
            <person name="Jiang P.X."/>
            <person name="Jones T."/>
            <person name="Kawai J."/>
            <person name="Kamiya A."/>
            <person name="Meyers C."/>
            <person name="Nakajima M."/>
            <person name="Narusaka M."/>
            <person name="Seki M."/>
            <person name="Sakurai T."/>
            <person name="Satou M."/>
            <person name="Tamse R."/>
            <person name="Vaysberg M."/>
            <person name="Wallender E.K."/>
            <person name="Wong C."/>
            <person name="Yamamura Y."/>
            <person name="Yuan S."/>
            <person name="Shinozaki K."/>
            <person name="Davis R.W."/>
            <person name="Theologis A."/>
            <person name="Ecker J.R."/>
        </authorList>
    </citation>
    <scope>NUCLEOTIDE SEQUENCE [LARGE SCALE MRNA]</scope>
    <source>
        <strain>cv. Columbia</strain>
    </source>
</reference>
<reference key="4">
    <citation type="submission" date="2004-09" db="EMBL/GenBank/DDBJ databases">
        <title>Large-scale analysis of RIKEN Arabidopsis full-length (RAFL) cDNAs.</title>
        <authorList>
            <person name="Totoki Y."/>
            <person name="Seki M."/>
            <person name="Ishida J."/>
            <person name="Nakajima M."/>
            <person name="Enju A."/>
            <person name="Kamiya A."/>
            <person name="Narusaka M."/>
            <person name="Shin-i T."/>
            <person name="Nakagawa M."/>
            <person name="Sakamoto N."/>
            <person name="Oishi K."/>
            <person name="Kohara Y."/>
            <person name="Kobayashi M."/>
            <person name="Toyoda A."/>
            <person name="Sakaki Y."/>
            <person name="Sakurai T."/>
            <person name="Iida K."/>
            <person name="Akiyama K."/>
            <person name="Satou M."/>
            <person name="Toyoda T."/>
            <person name="Konagaya A."/>
            <person name="Carninci P."/>
            <person name="Kawai J."/>
            <person name="Hayashizaki Y."/>
            <person name="Shinozaki K."/>
        </authorList>
    </citation>
    <scope>NUCLEOTIDE SEQUENCE [LARGE SCALE MRNA]</scope>
    <source>
        <strain>cv. Columbia</strain>
    </source>
</reference>
<reference key="5">
    <citation type="journal article" date="2005" name="Plant J.">
        <title>Requirement of aminoacyl-tRNA synthetases for gametogenesis and embryo development in Arabidopsis.</title>
        <authorList>
            <person name="Berg M."/>
            <person name="Rogers R."/>
            <person name="Muralla R."/>
            <person name="Meinke D."/>
        </authorList>
    </citation>
    <scope>DISRUPTION PHENOTYPE</scope>
</reference>
<reference key="6">
    <citation type="journal article" date="2005" name="Proc. Natl. Acad. Sci. U.S.A.">
        <title>Dual targeting is the rule for organellar aminoacyl-tRNA synthetases in Arabidopsis thaliana.</title>
        <authorList>
            <person name="Duchene A.-M."/>
            <person name="Giritch A."/>
            <person name="Hoffmann B."/>
            <person name="Cognat V."/>
            <person name="Lancelin D."/>
            <person name="Peeters N.M."/>
            <person name="Zaepfel M."/>
            <person name="Marechal-Drouard L."/>
            <person name="Small I.D."/>
        </authorList>
    </citation>
    <scope>SUBCELLULAR LOCATION</scope>
</reference>
<protein>
    <recommendedName>
        <fullName evidence="6">Proline--tRNA ligase, chloroplastic/mitochondrial</fullName>
        <ecNumber evidence="6">6.1.1.15</ecNumber>
    </recommendedName>
    <alternativeName>
        <fullName evidence="6">Prolyl-tRNA Synthetase 1</fullName>
        <shortName evidence="6">PRORS1</shortName>
    </alternativeName>
    <alternativeName>
        <fullName evidence="6">Prolyl-tRNA synthetase</fullName>
        <shortName evidence="6">ProRS</shortName>
    </alternativeName>
    <alternativeName>
        <fullName evidence="5">Protein OVULE ABORTION 6</fullName>
    </alternativeName>
</protein>
<organism>
    <name type="scientific">Arabidopsis thaliana</name>
    <name type="common">Mouse-ear cress</name>
    <dbReference type="NCBI Taxonomy" id="3702"/>
    <lineage>
        <taxon>Eukaryota</taxon>
        <taxon>Viridiplantae</taxon>
        <taxon>Streptophyta</taxon>
        <taxon>Embryophyta</taxon>
        <taxon>Tracheophyta</taxon>
        <taxon>Spermatophyta</taxon>
        <taxon>Magnoliopsida</taxon>
        <taxon>eudicotyledons</taxon>
        <taxon>Gunneridae</taxon>
        <taxon>Pentapetalae</taxon>
        <taxon>rosids</taxon>
        <taxon>malvids</taxon>
        <taxon>Brassicales</taxon>
        <taxon>Brassicaceae</taxon>
        <taxon>Camelineae</taxon>
        <taxon>Arabidopsis</taxon>
    </lineage>
</organism>
<gene>
    <name evidence="5" type="primary">OVA6</name>
    <name evidence="7" type="ordered locus">At5g52520</name>
    <name evidence="8" type="ORF">T4M5.3</name>
</gene>
<evidence type="ECO:0000250" key="1">
    <source>
        <dbReference type="UniProtKB" id="P16659"/>
    </source>
</evidence>
<evidence type="ECO:0000256" key="2">
    <source>
        <dbReference type="SAM" id="MobiDB-lite"/>
    </source>
</evidence>
<evidence type="ECO:0000269" key="3">
    <source>
    </source>
</evidence>
<evidence type="ECO:0000269" key="4">
    <source>
    </source>
</evidence>
<evidence type="ECO:0000303" key="5">
    <source>
    </source>
</evidence>
<evidence type="ECO:0000305" key="6"/>
<evidence type="ECO:0000312" key="7">
    <source>
        <dbReference type="Araport" id="AT5G52520"/>
    </source>
</evidence>
<evidence type="ECO:0000312" key="8">
    <source>
        <dbReference type="EMBL" id="BAB10183.1"/>
    </source>
</evidence>
<comment type="function">
    <text evidence="1">Catalyzes the attachment of proline to tRNA(Pro) in a two-step reaction: proline is first activated by ATP to form Pro-AMP and then transferred to the acceptor end of tRNA(Pro).</text>
</comment>
<comment type="catalytic activity">
    <reaction evidence="6">
        <text>tRNA(Pro) + L-proline + ATP = L-prolyl-tRNA(Pro) + AMP + diphosphate</text>
        <dbReference type="Rhea" id="RHEA:14305"/>
        <dbReference type="Rhea" id="RHEA-COMP:9700"/>
        <dbReference type="Rhea" id="RHEA-COMP:9702"/>
        <dbReference type="ChEBI" id="CHEBI:30616"/>
        <dbReference type="ChEBI" id="CHEBI:33019"/>
        <dbReference type="ChEBI" id="CHEBI:60039"/>
        <dbReference type="ChEBI" id="CHEBI:78442"/>
        <dbReference type="ChEBI" id="CHEBI:78532"/>
        <dbReference type="ChEBI" id="CHEBI:456215"/>
        <dbReference type="EC" id="6.1.1.15"/>
    </reaction>
</comment>
<comment type="subcellular location">
    <subcellularLocation>
        <location evidence="3">Plastid</location>
        <location evidence="3">Chloroplast</location>
    </subcellularLocation>
    <subcellularLocation>
        <location evidence="3">Mitochondrion</location>
    </subcellularLocation>
</comment>
<comment type="disruption phenotype">
    <text evidence="4">Lethal. In heterozygous plants, aborted ovules.</text>
</comment>
<comment type="similarity">
    <text evidence="6">Belongs to the class-II aminoacyl-tRNA synthetase family.</text>
</comment>
<accession>Q9FYR6</accession>
<proteinExistence type="evidence at transcript level"/>
<feature type="transit peptide" description="Chloroplast and mitochondrion" evidence="6">
    <location>
        <begin position="1"/>
        <end status="unknown"/>
    </location>
</feature>
<feature type="chain" id="PRO_0000433542" description="Proline--tRNA ligase, chloroplastic/mitochondrial" evidence="6">
    <location>
        <begin status="unknown"/>
        <end position="543"/>
    </location>
</feature>
<feature type="region of interest" description="Disordered" evidence="2">
    <location>
        <begin position="41"/>
        <end position="63"/>
    </location>
</feature>
<feature type="compositionally biased region" description="Basic and acidic residues" evidence="2">
    <location>
        <begin position="53"/>
        <end position="63"/>
    </location>
</feature>
<name>SYPM_ARATH</name>